<feature type="chain" id="PRO_0000229821" description="Phosphoribosyl-AMP cyclohydrolase">
    <location>
        <begin position="1"/>
        <end position="130"/>
    </location>
</feature>
<feature type="binding site" evidence="1">
    <location>
        <position position="80"/>
    </location>
    <ligand>
        <name>Mg(2+)</name>
        <dbReference type="ChEBI" id="CHEBI:18420"/>
    </ligand>
</feature>
<feature type="binding site" evidence="1">
    <location>
        <position position="81"/>
    </location>
    <ligand>
        <name>Zn(2+)</name>
        <dbReference type="ChEBI" id="CHEBI:29105"/>
        <note>ligand shared between dimeric partners</note>
    </ligand>
</feature>
<feature type="binding site" evidence="1">
    <location>
        <position position="82"/>
    </location>
    <ligand>
        <name>Mg(2+)</name>
        <dbReference type="ChEBI" id="CHEBI:18420"/>
    </ligand>
</feature>
<feature type="binding site" evidence="1">
    <location>
        <position position="84"/>
    </location>
    <ligand>
        <name>Mg(2+)</name>
        <dbReference type="ChEBI" id="CHEBI:18420"/>
    </ligand>
</feature>
<feature type="binding site" evidence="1">
    <location>
        <position position="98"/>
    </location>
    <ligand>
        <name>Zn(2+)</name>
        <dbReference type="ChEBI" id="CHEBI:29105"/>
        <note>ligand shared between dimeric partners</note>
    </ligand>
</feature>
<feature type="binding site" evidence="1">
    <location>
        <position position="105"/>
    </location>
    <ligand>
        <name>Zn(2+)</name>
        <dbReference type="ChEBI" id="CHEBI:29105"/>
        <note>ligand shared between dimeric partners</note>
    </ligand>
</feature>
<keyword id="KW-0028">Amino-acid biosynthesis</keyword>
<keyword id="KW-0963">Cytoplasm</keyword>
<keyword id="KW-0368">Histidine biosynthesis</keyword>
<keyword id="KW-0378">Hydrolase</keyword>
<keyword id="KW-0460">Magnesium</keyword>
<keyword id="KW-0479">Metal-binding</keyword>
<keyword id="KW-1185">Reference proteome</keyword>
<keyword id="KW-0862">Zinc</keyword>
<accession>Q30VD6</accession>
<gene>
    <name evidence="1" type="primary">hisI</name>
    <name type="ordered locus">Dde_3567</name>
</gene>
<organism>
    <name type="scientific">Oleidesulfovibrio alaskensis (strain ATCC BAA-1058 / DSM 17464 / G20)</name>
    <name type="common">Desulfovibrio alaskensis</name>
    <dbReference type="NCBI Taxonomy" id="207559"/>
    <lineage>
        <taxon>Bacteria</taxon>
        <taxon>Pseudomonadati</taxon>
        <taxon>Thermodesulfobacteriota</taxon>
        <taxon>Desulfovibrionia</taxon>
        <taxon>Desulfovibrionales</taxon>
        <taxon>Desulfovibrionaceae</taxon>
        <taxon>Oleidesulfovibrio</taxon>
    </lineage>
</organism>
<name>HIS3_OLEA2</name>
<evidence type="ECO:0000255" key="1">
    <source>
        <dbReference type="HAMAP-Rule" id="MF_01021"/>
    </source>
</evidence>
<protein>
    <recommendedName>
        <fullName evidence="1">Phosphoribosyl-AMP cyclohydrolase</fullName>
        <shortName evidence="1">PRA-CH</shortName>
        <ecNumber evidence="1">3.5.4.19</ecNumber>
    </recommendedName>
</protein>
<comment type="function">
    <text evidence="1">Catalyzes the hydrolysis of the adenine ring of phosphoribosyl-AMP.</text>
</comment>
<comment type="catalytic activity">
    <reaction evidence="1">
        <text>1-(5-phospho-beta-D-ribosyl)-5'-AMP + H2O = 1-(5-phospho-beta-D-ribosyl)-5-[(5-phospho-beta-D-ribosylamino)methylideneamino]imidazole-4-carboxamide</text>
        <dbReference type="Rhea" id="RHEA:20049"/>
        <dbReference type="ChEBI" id="CHEBI:15377"/>
        <dbReference type="ChEBI" id="CHEBI:58435"/>
        <dbReference type="ChEBI" id="CHEBI:59457"/>
        <dbReference type="EC" id="3.5.4.19"/>
    </reaction>
</comment>
<comment type="cofactor">
    <cofactor evidence="1">
        <name>Mg(2+)</name>
        <dbReference type="ChEBI" id="CHEBI:18420"/>
    </cofactor>
    <text evidence="1">Binds 1 Mg(2+) ion per subunit.</text>
</comment>
<comment type="cofactor">
    <cofactor evidence="1">
        <name>Zn(2+)</name>
        <dbReference type="ChEBI" id="CHEBI:29105"/>
    </cofactor>
    <text evidence="1">Binds 1 zinc ion per subunit.</text>
</comment>
<comment type="pathway">
    <text evidence="1">Amino-acid biosynthesis; L-histidine biosynthesis; L-histidine from 5-phospho-alpha-D-ribose 1-diphosphate: step 3/9.</text>
</comment>
<comment type="subunit">
    <text evidence="1">Homodimer.</text>
</comment>
<comment type="subcellular location">
    <subcellularLocation>
        <location evidence="1">Cytoplasm</location>
    </subcellularLocation>
</comment>
<comment type="similarity">
    <text evidence="1">Belongs to the PRA-CH family.</text>
</comment>
<reference key="1">
    <citation type="journal article" date="2011" name="J. Bacteriol.">
        <title>Complete genome sequence and updated annotation of Desulfovibrio alaskensis G20.</title>
        <authorList>
            <person name="Hauser L.J."/>
            <person name="Land M.L."/>
            <person name="Brown S.D."/>
            <person name="Larimer F."/>
            <person name="Keller K.L."/>
            <person name="Rapp-Giles B.J."/>
            <person name="Price M.N."/>
            <person name="Lin M."/>
            <person name="Bruce D.C."/>
            <person name="Detter J.C."/>
            <person name="Tapia R."/>
            <person name="Han C.S."/>
            <person name="Goodwin L.A."/>
            <person name="Cheng J.F."/>
            <person name="Pitluck S."/>
            <person name="Copeland A."/>
            <person name="Lucas S."/>
            <person name="Nolan M."/>
            <person name="Lapidus A.L."/>
            <person name="Palumbo A.V."/>
            <person name="Wall J.D."/>
        </authorList>
    </citation>
    <scope>NUCLEOTIDE SEQUENCE [LARGE SCALE GENOMIC DNA]</scope>
    <source>
        <strain>ATCC BAA-1058 / DSM 17464 / G20</strain>
    </source>
</reference>
<dbReference type="EC" id="3.5.4.19" evidence="1"/>
<dbReference type="EMBL" id="CP000112">
    <property type="protein sequence ID" value="ABB40360.1"/>
    <property type="molecule type" value="Genomic_DNA"/>
</dbReference>
<dbReference type="RefSeq" id="WP_011369249.1">
    <property type="nucleotide sequence ID" value="NC_007519.1"/>
</dbReference>
<dbReference type="SMR" id="Q30VD6"/>
<dbReference type="STRING" id="207559.Dde_3567"/>
<dbReference type="KEGG" id="dde:Dde_3567"/>
<dbReference type="eggNOG" id="COG0139">
    <property type="taxonomic scope" value="Bacteria"/>
</dbReference>
<dbReference type="HOGENOM" id="CLU_048577_5_0_7"/>
<dbReference type="UniPathway" id="UPA00031">
    <property type="reaction ID" value="UER00008"/>
</dbReference>
<dbReference type="Proteomes" id="UP000002710">
    <property type="component" value="Chromosome"/>
</dbReference>
<dbReference type="GO" id="GO:0005737">
    <property type="term" value="C:cytoplasm"/>
    <property type="evidence" value="ECO:0007669"/>
    <property type="project" value="UniProtKB-SubCell"/>
</dbReference>
<dbReference type="GO" id="GO:0000287">
    <property type="term" value="F:magnesium ion binding"/>
    <property type="evidence" value="ECO:0007669"/>
    <property type="project" value="UniProtKB-UniRule"/>
</dbReference>
<dbReference type="GO" id="GO:0004635">
    <property type="term" value="F:phosphoribosyl-AMP cyclohydrolase activity"/>
    <property type="evidence" value="ECO:0007669"/>
    <property type="project" value="UniProtKB-UniRule"/>
</dbReference>
<dbReference type="GO" id="GO:0008270">
    <property type="term" value="F:zinc ion binding"/>
    <property type="evidence" value="ECO:0007669"/>
    <property type="project" value="UniProtKB-UniRule"/>
</dbReference>
<dbReference type="GO" id="GO:0000105">
    <property type="term" value="P:L-histidine biosynthetic process"/>
    <property type="evidence" value="ECO:0007669"/>
    <property type="project" value="UniProtKB-UniRule"/>
</dbReference>
<dbReference type="FunFam" id="3.10.20.810:FF:000001">
    <property type="entry name" value="Histidine biosynthesis bifunctional protein HisIE"/>
    <property type="match status" value="1"/>
</dbReference>
<dbReference type="Gene3D" id="3.10.20.810">
    <property type="entry name" value="Phosphoribosyl-AMP cyclohydrolase"/>
    <property type="match status" value="1"/>
</dbReference>
<dbReference type="HAMAP" id="MF_01021">
    <property type="entry name" value="HisI"/>
    <property type="match status" value="1"/>
</dbReference>
<dbReference type="InterPro" id="IPR026660">
    <property type="entry name" value="PRA-CH"/>
</dbReference>
<dbReference type="InterPro" id="IPR002496">
    <property type="entry name" value="PRib_AMP_CycHydrolase_dom"/>
</dbReference>
<dbReference type="InterPro" id="IPR038019">
    <property type="entry name" value="PRib_AMP_CycHydrolase_sf"/>
</dbReference>
<dbReference type="NCBIfam" id="NF000768">
    <property type="entry name" value="PRK00051.1"/>
    <property type="match status" value="1"/>
</dbReference>
<dbReference type="PANTHER" id="PTHR42945">
    <property type="entry name" value="HISTIDINE BIOSYNTHESIS BIFUNCTIONAL PROTEIN"/>
    <property type="match status" value="1"/>
</dbReference>
<dbReference type="PANTHER" id="PTHR42945:SF1">
    <property type="entry name" value="HISTIDINE BIOSYNTHESIS BIFUNCTIONAL PROTEIN HIS7"/>
    <property type="match status" value="1"/>
</dbReference>
<dbReference type="Pfam" id="PF01502">
    <property type="entry name" value="PRA-CH"/>
    <property type="match status" value="1"/>
</dbReference>
<dbReference type="SUPFAM" id="SSF141734">
    <property type="entry name" value="HisI-like"/>
    <property type="match status" value="1"/>
</dbReference>
<sequence length="130" mass="14403">MTADLPDFVPDFEKTGGLVPAIAQDAVSGEVLMMAWMNEEAWHRTLTTGEAHYFSRSRGSLWHKGGTSGHTQHIRAVRLDCDSDTILLLVDQIGGAACHKGYKSCFFRELKDGEISVCSPLVFDPEEVYK</sequence>
<proteinExistence type="inferred from homology"/>